<keyword id="KW-0002">3D-structure</keyword>
<keyword id="KW-0249">Electron transport</keyword>
<keyword id="KW-0472">Membrane</keyword>
<keyword id="KW-0496">Mitochondrion</keyword>
<keyword id="KW-0999">Mitochondrion inner membrane</keyword>
<keyword id="KW-1185">Reference proteome</keyword>
<keyword id="KW-0679">Respiratory chain</keyword>
<keyword id="KW-0813">Transport</keyword>
<proteinExistence type="evidence at protein level"/>
<name>QCR6_CANAL</name>
<sequence length="135" mass="16010">MSFFRDLLESVVPTAYAEEPVEDVEVEQPEDAPEEEVSEETVEEEEDDDEDDDEDDEEEEETADPLDTLREECTKTAACKPFDHHFHECIERVTKEQEEPDYEHKHYKEDCIEEFFHLQHCVNDCVAPRLFNRLK</sequence>
<accession>A0A1D8PJT8</accession>
<protein>
    <recommendedName>
        <fullName evidence="5">Cytochrome b-c1 complex subunit 6, mitochondrial</fullName>
    </recommendedName>
    <alternativeName>
        <fullName evidence="5">Complex III subunit 6</fullName>
    </alternativeName>
</protein>
<dbReference type="EMBL" id="CP017625">
    <property type="protein sequence ID" value="AOW28429.1"/>
    <property type="molecule type" value="Genomic_DNA"/>
</dbReference>
<dbReference type="RefSeq" id="XP_019330856.1">
    <property type="nucleotide sequence ID" value="XM_019475311.1"/>
</dbReference>
<dbReference type="PDB" id="7RJA">
    <property type="method" value="EM"/>
    <property type="resolution" value="3.00 A"/>
    <property type="chains" value="H/R=1-135"/>
</dbReference>
<dbReference type="PDB" id="7RJB">
    <property type="method" value="EM"/>
    <property type="resolution" value="3.20 A"/>
    <property type="chains" value="H=1-135"/>
</dbReference>
<dbReference type="PDB" id="7RJC">
    <property type="method" value="EM"/>
    <property type="resolution" value="3.30 A"/>
    <property type="chains" value="H=1-135"/>
</dbReference>
<dbReference type="PDB" id="7RJD">
    <property type="method" value="EM"/>
    <property type="resolution" value="3.20 A"/>
    <property type="chains" value="H=1-135"/>
</dbReference>
<dbReference type="PDB" id="7RJE">
    <property type="method" value="EM"/>
    <property type="resolution" value="3.30 A"/>
    <property type="chains" value="H/Q=1-135"/>
</dbReference>
<dbReference type="PDBsum" id="7RJA"/>
<dbReference type="PDBsum" id="7RJB"/>
<dbReference type="PDBsum" id="7RJC"/>
<dbReference type="PDBsum" id="7RJD"/>
<dbReference type="PDBsum" id="7RJE"/>
<dbReference type="EMDB" id="EMD-24482"/>
<dbReference type="EMDB" id="EMD-24483"/>
<dbReference type="EMDB" id="EMD-24484"/>
<dbReference type="EMDB" id="EMD-24485"/>
<dbReference type="EMDB" id="EMD-24486"/>
<dbReference type="SMR" id="A0A1D8PJT8"/>
<dbReference type="STRING" id="237561.A0A1D8PJT8"/>
<dbReference type="EnsemblFungi" id="C3_04080W_A-T">
    <property type="protein sequence ID" value="C3_04080W_A-T-p1"/>
    <property type="gene ID" value="C3_04080W_A"/>
</dbReference>
<dbReference type="GeneID" id="30515200"/>
<dbReference type="KEGG" id="cal:CAALFM_C304080WA"/>
<dbReference type="CGD" id="CAL0000176689">
    <property type="gene designation" value="QCR6"/>
</dbReference>
<dbReference type="VEuPathDB" id="FungiDB:C3_04080W_A"/>
<dbReference type="eggNOG" id="KOG4763">
    <property type="taxonomic scope" value="Eukaryota"/>
</dbReference>
<dbReference type="InParanoid" id="A0A1D8PJT8"/>
<dbReference type="OMA" id="NEDCVEE"/>
<dbReference type="OrthoDB" id="405848at2759"/>
<dbReference type="Proteomes" id="UP000000559">
    <property type="component" value="Chromosome 3"/>
</dbReference>
<dbReference type="GO" id="GO:0005743">
    <property type="term" value="C:mitochondrial inner membrane"/>
    <property type="evidence" value="ECO:0007669"/>
    <property type="project" value="UniProtKB-SubCell"/>
</dbReference>
<dbReference type="GO" id="GO:0045275">
    <property type="term" value="C:respiratory chain complex III"/>
    <property type="evidence" value="ECO:0000318"/>
    <property type="project" value="GO_Central"/>
</dbReference>
<dbReference type="GO" id="GO:0006122">
    <property type="term" value="P:mitochondrial electron transport, ubiquinol to cytochrome c"/>
    <property type="evidence" value="ECO:0000318"/>
    <property type="project" value="GO_Central"/>
</dbReference>
<dbReference type="FunFam" id="1.10.287.20:FF:000003">
    <property type="entry name" value="Cytochrome b-c1 complex subunit 6"/>
    <property type="match status" value="1"/>
</dbReference>
<dbReference type="Gene3D" id="1.10.287.20">
    <property type="entry name" value="Ubiquinol-cytochrome C reductase hinge domain"/>
    <property type="match status" value="1"/>
</dbReference>
<dbReference type="InterPro" id="IPR003422">
    <property type="entry name" value="Cyt_b-c1_6"/>
</dbReference>
<dbReference type="InterPro" id="IPR023184">
    <property type="entry name" value="Ubol_cytC_Rdtase_hinge_dom"/>
</dbReference>
<dbReference type="InterPro" id="IPR036811">
    <property type="entry name" value="Ubol_cytC_Rdtase_hinge_dom_sf"/>
</dbReference>
<dbReference type="PANTHER" id="PTHR15336:SF0">
    <property type="entry name" value="CYTOCHROME B-C1 COMPLEX SUBUNIT 6, MITOCHONDRIAL"/>
    <property type="match status" value="1"/>
</dbReference>
<dbReference type="PANTHER" id="PTHR15336">
    <property type="entry name" value="UBIQUINOL-CYTOCHROME C REDUCTASE COMPLEX 7.8 KDA PROTEIN"/>
    <property type="match status" value="1"/>
</dbReference>
<dbReference type="Pfam" id="PF02320">
    <property type="entry name" value="UCR_hinge"/>
    <property type="match status" value="1"/>
</dbReference>
<dbReference type="SUPFAM" id="SSF81531">
    <property type="entry name" value="Non-heme 11 kDa protein of cytochrome bc1 complex (Ubiquinol-cytochrome c reductase)"/>
    <property type="match status" value="1"/>
</dbReference>
<comment type="function">
    <text evidence="3 4">Component of the ubiquinol-cytochrome c oxidoreductase, a multisubunit transmembrane complex that is part of the mitochondrial electron transport chain which drives oxidative phosphorylation (PubMed:34525326, PubMed:36923588). The complex plays an important role in the uptake of multiple carbon sources present in different host niches (PubMed:36923588).</text>
</comment>
<comment type="subunit">
    <text evidence="3">Component of the ubiquinol-cytochrome c oxidoreductase (cytochrome b-c1 complex, complex III, CIII), a multisubunit enzyme composed of 10 subunits. The complex is composed of 3 respiratory subunits cytochrome b (COB), cytochrome c1 (CYT1) and Rieske protein (RIP1), 2 core protein subunits COR1 and QCR2, and 5 low-molecular weight protein subunits QCR6, QCR7, QCR8, QCR9 and QCR10. The complex exists as an obligatory dimer and forms supercomplexes (SCs) in the inner mitochondrial membrane with a monomer or a dimer of cytochrome c oxidase (complex IV, CIV), resulting in 2 different assemblies (supercomplexes III(2)IV and III(2)IV(2)).</text>
</comment>
<comment type="subcellular location">
    <subcellularLocation>
        <location evidence="1">Mitochondrion inner membrane</location>
        <topology evidence="1">Peripheral membrane protein</topology>
        <orientation evidence="1">Intermembrane side</orientation>
    </subcellularLocation>
</comment>
<comment type="disruption phenotype">
    <text evidence="4">Leads to decreased vegetative growth on several carbon sources.</text>
</comment>
<comment type="similarity">
    <text evidence="6">Belongs to the UQCRH/QCR6 family.</text>
</comment>
<organism>
    <name type="scientific">Candida albicans (strain SC5314 / ATCC MYA-2876)</name>
    <name type="common">Yeast</name>
    <dbReference type="NCBI Taxonomy" id="237561"/>
    <lineage>
        <taxon>Eukaryota</taxon>
        <taxon>Fungi</taxon>
        <taxon>Dikarya</taxon>
        <taxon>Ascomycota</taxon>
        <taxon>Saccharomycotina</taxon>
        <taxon>Pichiomycetes</taxon>
        <taxon>Debaryomycetaceae</taxon>
        <taxon>Candida/Lodderomyces clade</taxon>
        <taxon>Candida</taxon>
    </lineage>
</organism>
<gene>
    <name evidence="5" type="primary">QCR6</name>
    <name type="ordered locus">CAALFM_C304080WA</name>
    <name type="ordered locus">orf19.913.2</name>
</gene>
<reference key="1">
    <citation type="journal article" date="2004" name="Proc. Natl. Acad. Sci. U.S.A.">
        <title>The diploid genome sequence of Candida albicans.</title>
        <authorList>
            <person name="Jones T."/>
            <person name="Federspiel N.A."/>
            <person name="Chibana H."/>
            <person name="Dungan J."/>
            <person name="Kalman S."/>
            <person name="Magee B.B."/>
            <person name="Newport G."/>
            <person name="Thorstenson Y.R."/>
            <person name="Agabian N."/>
            <person name="Magee P.T."/>
            <person name="Davis R.W."/>
            <person name="Scherer S."/>
        </authorList>
    </citation>
    <scope>NUCLEOTIDE SEQUENCE [LARGE SCALE GENOMIC DNA]</scope>
    <source>
        <strain>SC5314 / ATCC MYA-2876</strain>
    </source>
</reference>
<reference key="2">
    <citation type="journal article" date="2007" name="Genome Biol.">
        <title>Assembly of the Candida albicans genome into sixteen supercontigs aligned on the eight chromosomes.</title>
        <authorList>
            <person name="van het Hoog M."/>
            <person name="Rast T.J."/>
            <person name="Martchenko M."/>
            <person name="Grindle S."/>
            <person name="Dignard D."/>
            <person name="Hogues H."/>
            <person name="Cuomo C."/>
            <person name="Berriman M."/>
            <person name="Scherer S."/>
            <person name="Magee B.B."/>
            <person name="Whiteway M."/>
            <person name="Chibana H."/>
            <person name="Nantel A."/>
            <person name="Magee P.T."/>
        </authorList>
    </citation>
    <scope>GENOME REANNOTATION</scope>
    <source>
        <strain>SC5314 / ATCC MYA-2876</strain>
    </source>
</reference>
<reference key="3">
    <citation type="journal article" date="2013" name="Genome Biol.">
        <title>Assembly of a phased diploid Candida albicans genome facilitates allele-specific measurements and provides a simple model for repeat and indel structure.</title>
        <authorList>
            <person name="Muzzey D."/>
            <person name="Schwartz K."/>
            <person name="Weissman J.S."/>
            <person name="Sherlock G."/>
        </authorList>
    </citation>
    <scope>NUCLEOTIDE SEQUENCE [LARGE SCALE GENOMIC DNA]</scope>
    <scope>GENOME REANNOTATION</scope>
    <source>
        <strain>SC5314 / ATCC MYA-2876</strain>
    </source>
</reference>
<reference key="4">
    <citation type="journal article" date="2023" name="Front. Cell. Infect. Microbiol.">
        <title>QCR7 affects the virulence of Candida albicans and the uptake of multiple carbon sources present in different host niches.</title>
        <authorList>
            <person name="Zeng L."/>
            <person name="Huang Y."/>
            <person name="Tan J."/>
            <person name="Peng J."/>
            <person name="Hu N."/>
            <person name="Liu Q."/>
            <person name="Cao Y."/>
            <person name="Zhang Y."/>
            <person name="Chen J."/>
            <person name="Huang X."/>
        </authorList>
    </citation>
    <scope>FUNCTION</scope>
    <scope>DISRUPTION PHENOTYPE</scope>
</reference>
<reference evidence="7 8 9 10 11" key="5">
    <citation type="journal article" date="2022" name="Structure">
        <title>Rieske head domain dynamics and indazole-derivative inhibition of Candida albicans complex III.</title>
        <authorList>
            <person name="Di Trani J.M."/>
            <person name="Liu Z."/>
            <person name="Whitesell L."/>
            <person name="Brzezinski P."/>
            <person name="Cowen L.E."/>
            <person name="Rubinstein J.L."/>
        </authorList>
    </citation>
    <scope>STRUCTURE BY ELECTRON MICROSCOPY (3.00 ANGSTROMS) OF THE HOMODIMERIC RESPIRATORY COMPLEX III</scope>
    <scope>FUNCTION</scope>
    <scope>SUBUNIT</scope>
</reference>
<evidence type="ECO:0000250" key="1">
    <source>
        <dbReference type="UniProtKB" id="P00127"/>
    </source>
</evidence>
<evidence type="ECO:0000256" key="2">
    <source>
        <dbReference type="SAM" id="MobiDB-lite"/>
    </source>
</evidence>
<evidence type="ECO:0000269" key="3">
    <source>
    </source>
</evidence>
<evidence type="ECO:0000269" key="4">
    <source>
    </source>
</evidence>
<evidence type="ECO:0000303" key="5">
    <source>
    </source>
</evidence>
<evidence type="ECO:0000305" key="6"/>
<evidence type="ECO:0007744" key="7">
    <source>
        <dbReference type="PDB" id="7RJA"/>
    </source>
</evidence>
<evidence type="ECO:0007744" key="8">
    <source>
        <dbReference type="PDB" id="7RJB"/>
    </source>
</evidence>
<evidence type="ECO:0007744" key="9">
    <source>
        <dbReference type="PDB" id="7RJC"/>
    </source>
</evidence>
<evidence type="ECO:0007744" key="10">
    <source>
        <dbReference type="PDB" id="7RJD"/>
    </source>
</evidence>
<evidence type="ECO:0007744" key="11">
    <source>
        <dbReference type="PDB" id="7RJE"/>
    </source>
</evidence>
<evidence type="ECO:0007829" key="12">
    <source>
        <dbReference type="PDB" id="7RJA"/>
    </source>
</evidence>
<feature type="chain" id="PRO_0000459230" description="Cytochrome b-c1 complex subunit 6, mitochondrial">
    <location>
        <begin position="1"/>
        <end position="135"/>
    </location>
</feature>
<feature type="region of interest" description="Disordered" evidence="2">
    <location>
        <begin position="1"/>
        <end position="70"/>
    </location>
</feature>
<feature type="compositionally biased region" description="Acidic residues" evidence="2">
    <location>
        <begin position="19"/>
        <end position="64"/>
    </location>
</feature>
<feature type="helix" evidence="12">
    <location>
        <begin position="65"/>
        <end position="74"/>
    </location>
</feature>
<feature type="turn" evidence="12">
    <location>
        <begin position="77"/>
        <end position="79"/>
    </location>
</feature>
<feature type="helix" evidence="12">
    <location>
        <begin position="80"/>
        <end position="98"/>
    </location>
</feature>
<feature type="helix" evidence="12">
    <location>
        <begin position="102"/>
        <end position="104"/>
    </location>
</feature>
<feature type="helix" evidence="12">
    <location>
        <begin position="112"/>
        <end position="130"/>
    </location>
</feature>
<feature type="helix" evidence="12">
    <location>
        <begin position="131"/>
        <end position="133"/>
    </location>
</feature>